<proteinExistence type="inferred from homology"/>
<organism>
    <name type="scientific">Francisella tularensis subsp. mediasiatica (strain FSC147)</name>
    <dbReference type="NCBI Taxonomy" id="441952"/>
    <lineage>
        <taxon>Bacteria</taxon>
        <taxon>Pseudomonadati</taxon>
        <taxon>Pseudomonadota</taxon>
        <taxon>Gammaproteobacteria</taxon>
        <taxon>Thiotrichales</taxon>
        <taxon>Francisellaceae</taxon>
        <taxon>Francisella</taxon>
    </lineage>
</organism>
<sequence>MSTKLQDHFDKITKILSGFGVEGCISYGEITFSIRDQRDIHLILKKLKKEYLFEQLTDVTAVDYLTYGQSDWQVGKVVSQTGFSRGRQQDFKTAAVDNRFEIIYQLLSMANNVRIRVKCKLKDAQIILVDSVSDLWPSANWAEREVYDMFGIYFNNHPDLRRVLTDYGFVGHPLRKDFPQTGYVEMRYDENLGRVVYEPVEIDDRVNTPRVIRN</sequence>
<feature type="chain" id="PRO_0000358099" description="NADH-quinone oxidoreductase subunit C">
    <location>
        <begin position="1"/>
        <end position="214"/>
    </location>
</feature>
<accession>B2SEV1</accession>
<name>NUOC_FRATM</name>
<gene>
    <name evidence="1" type="primary">nuoC</name>
    <name type="ordered locus">FTM_0096</name>
</gene>
<protein>
    <recommendedName>
        <fullName evidence="1">NADH-quinone oxidoreductase subunit C</fullName>
        <ecNumber evidence="1">7.1.1.-</ecNumber>
    </recommendedName>
    <alternativeName>
        <fullName evidence="1">NADH dehydrogenase I subunit C</fullName>
    </alternativeName>
    <alternativeName>
        <fullName evidence="1">NDH-1 subunit C</fullName>
    </alternativeName>
</protein>
<reference key="1">
    <citation type="journal article" date="2009" name="PLoS Pathog.">
        <title>Molecular evolutionary consequences of niche restriction in Francisella tularensis, a facultative intracellular pathogen.</title>
        <authorList>
            <person name="Larsson P."/>
            <person name="Elfsmark D."/>
            <person name="Svensson K."/>
            <person name="Wikstroem P."/>
            <person name="Forsman M."/>
            <person name="Brettin T."/>
            <person name="Keim P."/>
            <person name="Johansson A."/>
        </authorList>
    </citation>
    <scope>NUCLEOTIDE SEQUENCE [LARGE SCALE GENOMIC DNA]</scope>
    <source>
        <strain>FSC147</strain>
    </source>
</reference>
<comment type="function">
    <text evidence="1">NDH-1 shuttles electrons from NADH, via FMN and iron-sulfur (Fe-S) centers, to quinones in the respiratory chain. The immediate electron acceptor for the enzyme in this species is believed to be ubiquinone. Couples the redox reaction to proton translocation (for every two electrons transferred, four hydrogen ions are translocated across the cytoplasmic membrane), and thus conserves the redox energy in a proton gradient.</text>
</comment>
<comment type="catalytic activity">
    <reaction evidence="1">
        <text>a quinone + NADH + 5 H(+)(in) = a quinol + NAD(+) + 4 H(+)(out)</text>
        <dbReference type="Rhea" id="RHEA:57888"/>
        <dbReference type="ChEBI" id="CHEBI:15378"/>
        <dbReference type="ChEBI" id="CHEBI:24646"/>
        <dbReference type="ChEBI" id="CHEBI:57540"/>
        <dbReference type="ChEBI" id="CHEBI:57945"/>
        <dbReference type="ChEBI" id="CHEBI:132124"/>
    </reaction>
</comment>
<comment type="subunit">
    <text evidence="1">NDH-1 is composed of 14 different subunits. Subunits NuoB, C, D, E, F, and G constitute the peripheral sector of the complex.</text>
</comment>
<comment type="subcellular location">
    <subcellularLocation>
        <location evidence="1">Cell inner membrane</location>
        <topology evidence="1">Peripheral membrane protein</topology>
        <orientation evidence="1">Cytoplasmic side</orientation>
    </subcellularLocation>
</comment>
<comment type="similarity">
    <text evidence="1">Belongs to the complex I 30 kDa subunit family.</text>
</comment>
<keyword id="KW-0997">Cell inner membrane</keyword>
<keyword id="KW-1003">Cell membrane</keyword>
<keyword id="KW-0472">Membrane</keyword>
<keyword id="KW-0520">NAD</keyword>
<keyword id="KW-0874">Quinone</keyword>
<keyword id="KW-1278">Translocase</keyword>
<keyword id="KW-0813">Transport</keyword>
<keyword id="KW-0830">Ubiquinone</keyword>
<evidence type="ECO:0000255" key="1">
    <source>
        <dbReference type="HAMAP-Rule" id="MF_01357"/>
    </source>
</evidence>
<dbReference type="EC" id="7.1.1.-" evidence="1"/>
<dbReference type="EMBL" id="CP000915">
    <property type="protein sequence ID" value="ACD30196.1"/>
    <property type="molecule type" value="Genomic_DNA"/>
</dbReference>
<dbReference type="SMR" id="B2SEV1"/>
<dbReference type="KEGG" id="ftm:FTM_0096"/>
<dbReference type="HOGENOM" id="CLU_042628_2_1_6"/>
<dbReference type="GO" id="GO:0005886">
    <property type="term" value="C:plasma membrane"/>
    <property type="evidence" value="ECO:0007669"/>
    <property type="project" value="UniProtKB-SubCell"/>
</dbReference>
<dbReference type="GO" id="GO:0008137">
    <property type="term" value="F:NADH dehydrogenase (ubiquinone) activity"/>
    <property type="evidence" value="ECO:0007669"/>
    <property type="project" value="InterPro"/>
</dbReference>
<dbReference type="GO" id="GO:0050136">
    <property type="term" value="F:NADH:ubiquinone reductase (non-electrogenic) activity"/>
    <property type="evidence" value="ECO:0007669"/>
    <property type="project" value="UniProtKB-UniRule"/>
</dbReference>
<dbReference type="GO" id="GO:0048038">
    <property type="term" value="F:quinone binding"/>
    <property type="evidence" value="ECO:0007669"/>
    <property type="project" value="UniProtKB-KW"/>
</dbReference>
<dbReference type="Gene3D" id="3.30.460.80">
    <property type="entry name" value="NADH:ubiquinone oxidoreductase, 30kDa subunit"/>
    <property type="match status" value="1"/>
</dbReference>
<dbReference type="HAMAP" id="MF_01357">
    <property type="entry name" value="NDH1_NuoC"/>
    <property type="match status" value="1"/>
</dbReference>
<dbReference type="InterPro" id="IPR010218">
    <property type="entry name" value="NADH_DH_suC"/>
</dbReference>
<dbReference type="InterPro" id="IPR037232">
    <property type="entry name" value="NADH_quin_OxRdtase_su_C/D-like"/>
</dbReference>
<dbReference type="InterPro" id="IPR001268">
    <property type="entry name" value="NADH_UbQ_OxRdtase_30kDa_su"/>
</dbReference>
<dbReference type="InterPro" id="IPR020396">
    <property type="entry name" value="NADH_UbQ_OxRdtase_CS"/>
</dbReference>
<dbReference type="NCBIfam" id="TIGR01961">
    <property type="entry name" value="NuoC_fam"/>
    <property type="match status" value="1"/>
</dbReference>
<dbReference type="NCBIfam" id="NF004730">
    <property type="entry name" value="PRK06074.1-1"/>
    <property type="match status" value="1"/>
</dbReference>
<dbReference type="PANTHER" id="PTHR10884:SF14">
    <property type="entry name" value="NADH DEHYDROGENASE [UBIQUINONE] IRON-SULFUR PROTEIN 3, MITOCHONDRIAL"/>
    <property type="match status" value="1"/>
</dbReference>
<dbReference type="PANTHER" id="PTHR10884">
    <property type="entry name" value="NADH DEHYDROGENASE UBIQUINONE IRON-SULFUR PROTEIN 3"/>
    <property type="match status" value="1"/>
</dbReference>
<dbReference type="Pfam" id="PF00329">
    <property type="entry name" value="Complex1_30kDa"/>
    <property type="match status" value="1"/>
</dbReference>
<dbReference type="SUPFAM" id="SSF143243">
    <property type="entry name" value="Nqo5-like"/>
    <property type="match status" value="1"/>
</dbReference>
<dbReference type="PROSITE" id="PS00542">
    <property type="entry name" value="COMPLEX1_30K"/>
    <property type="match status" value="1"/>
</dbReference>